<sequence length="302" mass="32616">MIERSHHELRKAFGDLLQGHVCKFAASVFDPISVRMASDLGFEVGIQGGSVASLQVLGAPDIALLTLDEYVEQVTRVGRASQIPVIADADHGFGNALNVMRTVSELQKAGVAALTLEDTHLPARYEEQSPVLIGEEEAAAKIYAARFSRSDDSLSIIARTNVAATTLEDSIARTAAYEKAGADAICLVGVKDFHHLAALTEHLTTPIMLINYGNPALCDVEKLSAANVRIVVNGHAPYFSAIKSIYQALREQSGSQGPELSLPELISKYTRVESYREWTKTYLKVGHDSPCGVTPRGPQLCN</sequence>
<evidence type="ECO:0000255" key="1">
    <source>
        <dbReference type="HAMAP-Rule" id="MF_01299"/>
    </source>
</evidence>
<evidence type="ECO:0000305" key="2"/>
<name>OADC2_PSEPW</name>
<feature type="chain" id="PRO_0000364070" description="Oxaloacetate decarboxylase 2">
    <location>
        <begin position="1"/>
        <end position="302"/>
    </location>
</feature>
<feature type="binding site" evidence="1">
    <location>
        <position position="50"/>
    </location>
    <ligand>
        <name>substrate</name>
    </ligand>
</feature>
<feature type="binding site" evidence="1">
    <location>
        <position position="88"/>
    </location>
    <ligand>
        <name>Mg(2+)</name>
        <dbReference type="ChEBI" id="CHEBI:18420"/>
    </ligand>
</feature>
<feature type="binding site" evidence="1">
    <location>
        <position position="159"/>
    </location>
    <ligand>
        <name>substrate</name>
    </ligand>
</feature>
<feature type="binding site" evidence="1">
    <location>
        <position position="235"/>
    </location>
    <ligand>
        <name>substrate</name>
    </ligand>
</feature>
<reference key="1">
    <citation type="submission" date="2008-02" db="EMBL/GenBank/DDBJ databases">
        <title>Complete sequence of Pseudomonas putida W619.</title>
        <authorList>
            <person name="Copeland A."/>
            <person name="Lucas S."/>
            <person name="Lapidus A."/>
            <person name="Barry K."/>
            <person name="Detter J.C."/>
            <person name="Glavina del Rio T."/>
            <person name="Dalin E."/>
            <person name="Tice H."/>
            <person name="Pitluck S."/>
            <person name="Chain P."/>
            <person name="Malfatti S."/>
            <person name="Shin M."/>
            <person name="Vergez L."/>
            <person name="Schmutz J."/>
            <person name="Larimer F."/>
            <person name="Land M."/>
            <person name="Hauser L."/>
            <person name="Kyrpides N."/>
            <person name="Kim E."/>
            <person name="Taghavi S."/>
            <person name="Vangronsveld D."/>
            <person name="van der Lelie D."/>
            <person name="Richardson P."/>
        </authorList>
    </citation>
    <scope>NUCLEOTIDE SEQUENCE [LARGE SCALE GENOMIC DNA]</scope>
    <source>
        <strain>W619</strain>
    </source>
</reference>
<protein>
    <recommendedName>
        <fullName evidence="1">Oxaloacetate decarboxylase 2</fullName>
        <ecNumber evidence="1">4.1.1.112</ecNumber>
    </recommendedName>
</protein>
<dbReference type="EC" id="4.1.1.112" evidence="1"/>
<dbReference type="EMBL" id="CP000949">
    <property type="protein sequence ID" value="ACA75628.1"/>
    <property type="molecule type" value="Genomic_DNA"/>
</dbReference>
<dbReference type="SMR" id="B1JFP4"/>
<dbReference type="STRING" id="390235.PputW619_5152"/>
<dbReference type="KEGG" id="ppw:PputW619_5152"/>
<dbReference type="eggNOG" id="COG2513">
    <property type="taxonomic scope" value="Bacteria"/>
</dbReference>
<dbReference type="HOGENOM" id="CLU_027389_3_2_6"/>
<dbReference type="OrthoDB" id="9771433at2"/>
<dbReference type="GO" id="GO:0000287">
    <property type="term" value="F:magnesium ion binding"/>
    <property type="evidence" value="ECO:0007669"/>
    <property type="project" value="UniProtKB-UniRule"/>
</dbReference>
<dbReference type="GO" id="GO:0046421">
    <property type="term" value="F:methylisocitrate lyase activity"/>
    <property type="evidence" value="ECO:0007669"/>
    <property type="project" value="TreeGrafter"/>
</dbReference>
<dbReference type="GO" id="GO:0008948">
    <property type="term" value="F:oxaloacetate decarboxylase activity"/>
    <property type="evidence" value="ECO:0007669"/>
    <property type="project" value="UniProtKB-UniRule"/>
</dbReference>
<dbReference type="GO" id="GO:0006107">
    <property type="term" value="P:oxaloacetate metabolic process"/>
    <property type="evidence" value="ECO:0007669"/>
    <property type="project" value="UniProtKB-UniRule"/>
</dbReference>
<dbReference type="GO" id="GO:0019629">
    <property type="term" value="P:propionate catabolic process, 2-methylcitrate cycle"/>
    <property type="evidence" value="ECO:0007669"/>
    <property type="project" value="TreeGrafter"/>
</dbReference>
<dbReference type="GO" id="GO:0042866">
    <property type="term" value="P:pyruvate biosynthetic process"/>
    <property type="evidence" value="ECO:0007669"/>
    <property type="project" value="UniProtKB-UniRule"/>
</dbReference>
<dbReference type="CDD" id="cd00377">
    <property type="entry name" value="ICL_PEPM"/>
    <property type="match status" value="1"/>
</dbReference>
<dbReference type="Gene3D" id="3.20.20.60">
    <property type="entry name" value="Phosphoenolpyruvate-binding domains"/>
    <property type="match status" value="1"/>
</dbReference>
<dbReference type="HAMAP" id="MF_01299">
    <property type="entry name" value="OadC"/>
    <property type="match status" value="1"/>
</dbReference>
<dbReference type="InterPro" id="IPR039556">
    <property type="entry name" value="ICL/PEPM"/>
</dbReference>
<dbReference type="InterPro" id="IPR023687">
    <property type="entry name" value="Oxaloacetate_deCOase_bac"/>
</dbReference>
<dbReference type="InterPro" id="IPR015813">
    <property type="entry name" value="Pyrv/PenolPyrv_kinase-like_dom"/>
</dbReference>
<dbReference type="InterPro" id="IPR040442">
    <property type="entry name" value="Pyrv_kinase-like_dom_sf"/>
</dbReference>
<dbReference type="PANTHER" id="PTHR42905:SF3">
    <property type="entry name" value="OXALOACETATE DECARBOXYLASE"/>
    <property type="match status" value="1"/>
</dbReference>
<dbReference type="PANTHER" id="PTHR42905">
    <property type="entry name" value="PHOSPHOENOLPYRUVATE CARBOXYLASE"/>
    <property type="match status" value="1"/>
</dbReference>
<dbReference type="Pfam" id="PF13714">
    <property type="entry name" value="PEP_mutase"/>
    <property type="match status" value="1"/>
</dbReference>
<dbReference type="SUPFAM" id="SSF51621">
    <property type="entry name" value="Phosphoenolpyruvate/pyruvate domain"/>
    <property type="match status" value="1"/>
</dbReference>
<proteinExistence type="inferred from homology"/>
<gene>
    <name type="ordered locus">PputW619_5152</name>
</gene>
<comment type="function">
    <text evidence="1">Catalyzes the decarboxylation of oxaloacetate into pyruvate. Seems to play a role in maintaining cellular concentrations of bicarbonate and pyruvate.</text>
</comment>
<comment type="catalytic activity">
    <reaction evidence="1">
        <text>oxaloacetate + H(+) = pyruvate + CO2</text>
        <dbReference type="Rhea" id="RHEA:15641"/>
        <dbReference type="ChEBI" id="CHEBI:15361"/>
        <dbReference type="ChEBI" id="CHEBI:15378"/>
        <dbReference type="ChEBI" id="CHEBI:16452"/>
        <dbReference type="ChEBI" id="CHEBI:16526"/>
        <dbReference type="EC" id="4.1.1.112"/>
    </reaction>
</comment>
<comment type="cofactor">
    <cofactor evidence="1">
        <name>Mg(2+)</name>
        <dbReference type="ChEBI" id="CHEBI:18420"/>
    </cofactor>
    <text evidence="1">Binds 1 Mg(2+) ion per subunit.</text>
</comment>
<comment type="subunit">
    <text evidence="1">Homotetramer; dimer of dimers.</text>
</comment>
<comment type="similarity">
    <text evidence="2">Belongs to the isocitrate lyase/PEP mutase superfamily. Oxaloacetate decarboxylase family.</text>
</comment>
<organism>
    <name type="scientific">Pseudomonas putida (strain W619)</name>
    <dbReference type="NCBI Taxonomy" id="390235"/>
    <lineage>
        <taxon>Bacteria</taxon>
        <taxon>Pseudomonadati</taxon>
        <taxon>Pseudomonadota</taxon>
        <taxon>Gammaproteobacteria</taxon>
        <taxon>Pseudomonadales</taxon>
        <taxon>Pseudomonadaceae</taxon>
        <taxon>Pseudomonas</taxon>
    </lineage>
</organism>
<accession>B1JFP4</accession>
<keyword id="KW-0210">Decarboxylase</keyword>
<keyword id="KW-0456">Lyase</keyword>
<keyword id="KW-0460">Magnesium</keyword>
<keyword id="KW-0479">Metal-binding</keyword>